<organism>
    <name type="scientific">Bothrops atrox</name>
    <name type="common">Barba amarilla</name>
    <name type="synonym">Fer-de-lance</name>
    <dbReference type="NCBI Taxonomy" id="8725"/>
    <lineage>
        <taxon>Eukaryota</taxon>
        <taxon>Metazoa</taxon>
        <taxon>Chordata</taxon>
        <taxon>Craniata</taxon>
        <taxon>Vertebrata</taxon>
        <taxon>Euteleostomi</taxon>
        <taxon>Lepidosauria</taxon>
        <taxon>Squamata</taxon>
        <taxon>Bifurcata</taxon>
        <taxon>Unidentata</taxon>
        <taxon>Episquamata</taxon>
        <taxon>Toxicofera</taxon>
        <taxon>Serpentes</taxon>
        <taxon>Colubroidea</taxon>
        <taxon>Viperidae</taxon>
        <taxon>Crotalinae</taxon>
        <taxon>Bothrops</taxon>
    </lineage>
</organism>
<keyword id="KW-0002">3D-structure</keyword>
<keyword id="KW-0044">Antibiotic</keyword>
<keyword id="KW-0929">Antimicrobial</keyword>
<keyword id="KW-0053">Apoptosis</keyword>
<keyword id="KW-0204">Cytolysis</keyword>
<keyword id="KW-0903">Direct protein sequencing</keyword>
<keyword id="KW-1015">Disulfide bond</keyword>
<keyword id="KW-0274">FAD</keyword>
<keyword id="KW-0285">Flavoprotein</keyword>
<keyword id="KW-0325">Glycoprotein</keyword>
<keyword id="KW-0354">Hemolysis</keyword>
<keyword id="KW-1199">Hemostasis impairing toxin</keyword>
<keyword id="KW-0479">Metal-binding</keyword>
<keyword id="KW-0560">Oxidoreductase</keyword>
<keyword id="KW-1202">Platelet aggregation activating toxin</keyword>
<keyword id="KW-0964">Secreted</keyword>
<keyword id="KW-0732">Signal</keyword>
<keyword id="KW-0800">Toxin</keyword>
<keyword id="KW-0862">Zinc</keyword>
<dbReference type="EC" id="1.4.3.2" evidence="2"/>
<dbReference type="EMBL" id="GEDR01000075">
    <property type="protein sequence ID" value="JAV01887.1"/>
    <property type="molecule type" value="mRNA"/>
</dbReference>
<dbReference type="EMBL" id="KT150252">
    <property type="protein sequence ID" value="ALL27300.1"/>
    <property type="molecule type" value="mRNA"/>
</dbReference>
<dbReference type="PDB" id="5TS5">
    <property type="method" value="X-ray"/>
    <property type="resolution" value="2.30 A"/>
    <property type="chains" value="A/B/C/D=19-502"/>
</dbReference>
<dbReference type="PDBsum" id="5TS5"/>
<dbReference type="SMR" id="P0CC17"/>
<dbReference type="iPTMnet" id="P0CC17"/>
<dbReference type="BRENDA" id="1.4.3.2">
    <property type="organism ID" value="910"/>
</dbReference>
<dbReference type="GO" id="GO:0005576">
    <property type="term" value="C:extracellular region"/>
    <property type="evidence" value="ECO:0000314"/>
    <property type="project" value="UniProtKB"/>
</dbReference>
<dbReference type="GO" id="GO:0001716">
    <property type="term" value="F:L-amino-acid oxidase activity"/>
    <property type="evidence" value="ECO:0000314"/>
    <property type="project" value="UniProtKB"/>
</dbReference>
<dbReference type="GO" id="GO:0106329">
    <property type="term" value="F:L-phenylalaine oxidase activity"/>
    <property type="evidence" value="ECO:0007669"/>
    <property type="project" value="RHEA"/>
</dbReference>
<dbReference type="GO" id="GO:0046872">
    <property type="term" value="F:metal ion binding"/>
    <property type="evidence" value="ECO:0007669"/>
    <property type="project" value="UniProtKB-KW"/>
</dbReference>
<dbReference type="GO" id="GO:0090729">
    <property type="term" value="F:toxin activity"/>
    <property type="evidence" value="ECO:0007669"/>
    <property type="project" value="UniProtKB-KW"/>
</dbReference>
<dbReference type="GO" id="GO:0009063">
    <property type="term" value="P:amino acid catabolic process"/>
    <property type="evidence" value="ECO:0007669"/>
    <property type="project" value="TreeGrafter"/>
</dbReference>
<dbReference type="GO" id="GO:0006915">
    <property type="term" value="P:apoptotic process"/>
    <property type="evidence" value="ECO:0000314"/>
    <property type="project" value="UniProtKB"/>
</dbReference>
<dbReference type="GO" id="GO:0050829">
    <property type="term" value="P:defense response to Gram-negative bacterium"/>
    <property type="evidence" value="ECO:0000314"/>
    <property type="project" value="UniProtKB"/>
</dbReference>
<dbReference type="GO" id="GO:0050830">
    <property type="term" value="P:defense response to Gram-positive bacterium"/>
    <property type="evidence" value="ECO:0000314"/>
    <property type="project" value="UniProtKB"/>
</dbReference>
<dbReference type="GO" id="GO:0031640">
    <property type="term" value="P:killing of cells of another organism"/>
    <property type="evidence" value="ECO:0007669"/>
    <property type="project" value="UniProtKB-KW"/>
</dbReference>
<dbReference type="GO" id="GO:0044478">
    <property type="term" value="P:venom-mediated platelet aggregation"/>
    <property type="evidence" value="ECO:0000314"/>
    <property type="project" value="UniProtKB"/>
</dbReference>
<dbReference type="FunFam" id="1.10.405.10:FF:000004">
    <property type="entry name" value="Amine oxidase"/>
    <property type="match status" value="1"/>
</dbReference>
<dbReference type="FunFam" id="3.50.50.60:FF:000450">
    <property type="entry name" value="Amine oxidase"/>
    <property type="match status" value="1"/>
</dbReference>
<dbReference type="Gene3D" id="3.90.660.10">
    <property type="match status" value="1"/>
</dbReference>
<dbReference type="Gene3D" id="3.50.50.60">
    <property type="entry name" value="FAD/NAD(P)-binding domain"/>
    <property type="match status" value="1"/>
</dbReference>
<dbReference type="Gene3D" id="1.10.405.10">
    <property type="entry name" value="Guanine Nucleotide Dissociation Inhibitor, domain 1"/>
    <property type="match status" value="1"/>
</dbReference>
<dbReference type="InterPro" id="IPR002937">
    <property type="entry name" value="Amino_oxidase"/>
</dbReference>
<dbReference type="InterPro" id="IPR036188">
    <property type="entry name" value="FAD/NAD-bd_sf"/>
</dbReference>
<dbReference type="InterPro" id="IPR001613">
    <property type="entry name" value="Flavin_amine_oxidase"/>
</dbReference>
<dbReference type="InterPro" id="IPR050281">
    <property type="entry name" value="Flavin_monoamine_oxidase"/>
</dbReference>
<dbReference type="PANTHER" id="PTHR10742:SF355">
    <property type="entry name" value="AMINE OXIDASE"/>
    <property type="match status" value="1"/>
</dbReference>
<dbReference type="PANTHER" id="PTHR10742">
    <property type="entry name" value="FLAVIN MONOAMINE OXIDASE"/>
    <property type="match status" value="1"/>
</dbReference>
<dbReference type="Pfam" id="PF01593">
    <property type="entry name" value="Amino_oxidase"/>
    <property type="match status" value="1"/>
</dbReference>
<dbReference type="PRINTS" id="PR00757">
    <property type="entry name" value="AMINEOXDASEF"/>
</dbReference>
<dbReference type="SUPFAM" id="SSF54373">
    <property type="entry name" value="FAD-linked reductases, C-terminal domain"/>
    <property type="match status" value="1"/>
</dbReference>
<dbReference type="SUPFAM" id="SSF51905">
    <property type="entry name" value="FAD/NAD(P)-binding domain"/>
    <property type="match status" value="1"/>
</dbReference>
<protein>
    <recommendedName>
        <fullName evidence="5">L-amino-acid oxidase</fullName>
        <shortName evidence="5 6 7">BatroxLAAO</shortName>
        <shortName>LAO</shortName>
        <ecNumber evidence="2">1.4.3.2</ecNumber>
    </recommendedName>
</protein>
<sequence>MNVFFTFSLLFLAALGSCADDRNPLEECFRETDYEEFLEIAKNGLSTTSNPKRVVIVGAGMSGLSAAYVLANAGHQVTVLEASERAGGRVKTYRNEKEGWYANLGPMRLPEKHRIVREYIRKFDLQLNEFSQENENAWYFIKNIRKRVGEVNKDPGVLEYPVKPSEVGKSAGQLYEESLQKAVEELRRTNCSYMLNKYDTYSTKEYLLKEGNLSPGAVDMIGDLLNEDSGYYVSFIESLKHDDIFAYEKRFDEIVGGMDKLPTSMYQAIQEKVHLNARVIKIQQDVKEVTVTYQTSEKETLSVTADYVIVCTTSRAARRIKFEPPLPPKKAHALRSVHYRSGTKIFLTCTKKFWEDDGIHGGKSTTDLPSRFIYYPNHNFPNGVGVIIAYGIGDDANYFQALDFEDCGDIVINDLSLIHQLPKEEIQAICRPSMIQRWSLDKYAMGGITTFTPYQFQHFSEALTAPVDRIYFAGEYTAQAHGWIDSTIKSGLRAARDVNRASEIKK</sequence>
<accession>P0CC17</accession>
<accession>A0A0S1LJ33</accession>
<accession>A0A1L8D690</accession>
<feature type="signal peptide" evidence="2">
    <location>
        <begin position="1"/>
        <end position="18"/>
    </location>
</feature>
<feature type="chain" id="PRO_0000390927" description="L-amino-acid oxidase" evidence="9 11">
    <location>
        <begin position="19"/>
        <end position="506"/>
    </location>
</feature>
<feature type="binding site" evidence="4 14">
    <location>
        <position position="36"/>
    </location>
    <ligand>
        <name>Zn(2+)</name>
        <dbReference type="ChEBI" id="CHEBI:29105"/>
        <label>1</label>
    </ligand>
</feature>
<feature type="binding site" evidence="1">
    <location>
        <begin position="61"/>
        <end position="62"/>
    </location>
    <ligand>
        <name>FAD</name>
        <dbReference type="ChEBI" id="CHEBI:57692"/>
    </ligand>
</feature>
<feature type="binding site" evidence="14">
    <location>
        <position position="62"/>
    </location>
    <ligand>
        <name>FAD</name>
        <dbReference type="ChEBI" id="CHEBI:57692"/>
    </ligand>
</feature>
<feature type="binding site" evidence="14">
    <location>
        <begin position="81"/>
        <end position="82"/>
    </location>
    <ligand>
        <name>FAD</name>
        <dbReference type="ChEBI" id="CHEBI:57692"/>
    </ligand>
</feature>
<feature type="binding site" evidence="14">
    <location>
        <position position="89"/>
    </location>
    <ligand>
        <name>FAD</name>
        <dbReference type="ChEBI" id="CHEBI:57692"/>
    </ligand>
</feature>
<feature type="binding site" evidence="14">
    <location>
        <begin position="105"/>
        <end position="108"/>
    </location>
    <ligand>
        <name>FAD</name>
        <dbReference type="ChEBI" id="CHEBI:57692"/>
    </ligand>
</feature>
<feature type="binding site" evidence="1">
    <location>
        <position position="108"/>
    </location>
    <ligand>
        <name>substrate</name>
    </ligand>
</feature>
<feature type="binding site" evidence="4 14">
    <location>
        <position position="111"/>
    </location>
    <ligand>
        <name>Zn(2+)</name>
        <dbReference type="ChEBI" id="CHEBI:29105"/>
        <label>2</label>
    </ligand>
</feature>
<feature type="binding site" evidence="4 14">
    <location>
        <position position="118"/>
    </location>
    <ligand>
        <name>Zn(2+)</name>
        <dbReference type="ChEBI" id="CHEBI:29105"/>
        <label>3</label>
    </ligand>
</feature>
<feature type="binding site" evidence="14">
    <location>
        <position position="150"/>
    </location>
    <ligand>
        <name>Zn(2+)</name>
        <dbReference type="ChEBI" id="CHEBI:29105"/>
        <label>4</label>
    </ligand>
</feature>
<feature type="binding site" evidence="4 14">
    <location>
        <position position="219"/>
    </location>
    <ligand>
        <name>Zn(2+)</name>
        <dbReference type="ChEBI" id="CHEBI:29105"/>
        <label>2</label>
    </ligand>
</feature>
<feature type="binding site" evidence="1">
    <location>
        <position position="241"/>
    </location>
    <ligand>
        <name>substrate</name>
    </ligand>
</feature>
<feature type="binding site" evidence="4 14">
    <location>
        <position position="248"/>
    </location>
    <ligand>
        <name>Zn(2+)</name>
        <dbReference type="ChEBI" id="CHEBI:29105"/>
        <label>2</label>
    </ligand>
</feature>
<feature type="binding site" evidence="14">
    <location>
        <position position="279"/>
    </location>
    <ligand>
        <name>FAD</name>
        <dbReference type="ChEBI" id="CHEBI:57692"/>
    </ligand>
</feature>
<feature type="binding site" evidence="4 14">
    <location>
        <position position="299"/>
    </location>
    <ligand>
        <name>Zn(2+)</name>
        <dbReference type="ChEBI" id="CHEBI:29105"/>
        <label>4</label>
    </ligand>
</feature>
<feature type="binding site" evidence="4">
    <location>
        <position position="332"/>
    </location>
    <ligand>
        <name>Zn(2+)</name>
        <dbReference type="ChEBI" id="CHEBI:29105"/>
    </ligand>
</feature>
<feature type="binding site" evidence="1">
    <location>
        <position position="390"/>
    </location>
    <ligand>
        <name>substrate</name>
    </ligand>
</feature>
<feature type="binding site" evidence="4 14">
    <location>
        <position position="458"/>
    </location>
    <ligand>
        <name>Zn(2+)</name>
        <dbReference type="ChEBI" id="CHEBI:29105"/>
        <label>1</label>
    </ligand>
</feature>
<feature type="binding site" evidence="14">
    <location>
        <position position="475"/>
    </location>
    <ligand>
        <name>FAD</name>
        <dbReference type="ChEBI" id="CHEBI:57692"/>
    </ligand>
</feature>
<feature type="binding site" evidence="14">
    <location>
        <begin position="482"/>
        <end position="487"/>
    </location>
    <ligand>
        <name>FAD</name>
        <dbReference type="ChEBI" id="CHEBI:57692"/>
    </ligand>
</feature>
<feature type="binding site" evidence="1">
    <location>
        <begin position="482"/>
        <end position="483"/>
    </location>
    <ligand>
        <name>substrate</name>
    </ligand>
</feature>
<feature type="glycosylation site" description="N-linked (GlcNAc...) asparagine" evidence="4 14">
    <location>
        <position position="190"/>
    </location>
</feature>
<feature type="disulfide bond" evidence="4 14">
    <location>
        <begin position="28"/>
        <end position="191"/>
    </location>
</feature>
<feature type="disulfide bond" evidence="4 14">
    <location>
        <begin position="349"/>
        <end position="430"/>
    </location>
</feature>
<feature type="sequence conflict" description="In Ref. 2; ALL27300." evidence="8" ref="2">
    <original>SLLFLA</original>
    <variation>FMFSWL</variation>
    <location>
        <begin position="8"/>
        <end position="13"/>
    </location>
</feature>
<feature type="sequence conflict" description="In Ref. 1; JAV01887." evidence="8" ref="1">
    <original>R</original>
    <variation>K</variation>
    <location>
        <position position="121"/>
    </location>
</feature>
<feature type="sequence conflict" description="In Ref. 3; AA sequence." evidence="8" ref="3">
    <original>E</original>
    <variation>R</variation>
    <location>
        <position position="129"/>
    </location>
</feature>
<feature type="sequence conflict" description="In Ref. 3; AA sequence." evidence="8" ref="3">
    <original>S</original>
    <variation>SS</variation>
    <location>
        <position position="170"/>
    </location>
</feature>
<feature type="sequence conflict" description="In Ref. 2; ALL27300." evidence="8" ref="2">
    <original>Q</original>
    <variation>H</variation>
    <location>
        <position position="427"/>
    </location>
</feature>
<feature type="sequence conflict" description="In Ref. 3; AA sequence." evidence="8" ref="3">
    <location>
        <position position="476"/>
    </location>
</feature>
<feature type="sequence conflict" description="In Ref. 1; JAV01887." evidence="8" ref="1">
    <original>R</original>
    <variation>S</variation>
    <location>
        <position position="500"/>
    </location>
</feature>
<feature type="sequence conflict" description="In Ref. 1; JAV01887." evidence="8" ref="1">
    <location>
        <begin position="503"/>
        <end position="506"/>
    </location>
</feature>
<feature type="helix" evidence="15">
    <location>
        <begin position="24"/>
        <end position="29"/>
    </location>
</feature>
<feature type="helix" evidence="15">
    <location>
        <begin position="34"/>
        <end position="43"/>
    </location>
</feature>
<feature type="strand" evidence="15">
    <location>
        <begin position="53"/>
        <end position="57"/>
    </location>
</feature>
<feature type="helix" evidence="15">
    <location>
        <begin position="61"/>
        <end position="72"/>
    </location>
</feature>
<feature type="strand" evidence="15">
    <location>
        <begin position="76"/>
        <end position="80"/>
    </location>
</feature>
<feature type="strand" evidence="15">
    <location>
        <begin position="82"/>
        <end position="86"/>
    </location>
</feature>
<feature type="strand" evidence="15">
    <location>
        <begin position="92"/>
        <end position="95"/>
    </location>
</feature>
<feature type="turn" evidence="15">
    <location>
        <begin position="96"/>
        <end position="99"/>
    </location>
</feature>
<feature type="strand" evidence="15">
    <location>
        <begin position="100"/>
        <end position="105"/>
    </location>
</feature>
<feature type="helix" evidence="15">
    <location>
        <begin position="114"/>
        <end position="122"/>
    </location>
</feature>
<feature type="strand" evidence="15">
    <location>
        <begin position="127"/>
        <end position="130"/>
    </location>
</feature>
<feature type="strand" evidence="15">
    <location>
        <begin position="137"/>
        <end position="141"/>
    </location>
</feature>
<feature type="strand" evidence="15">
    <location>
        <begin position="144"/>
        <end position="147"/>
    </location>
</feature>
<feature type="helix" evidence="15">
    <location>
        <begin position="148"/>
        <end position="153"/>
    </location>
</feature>
<feature type="helix" evidence="15">
    <location>
        <begin position="155"/>
        <end position="158"/>
    </location>
</feature>
<feature type="helix" evidence="15">
    <location>
        <begin position="164"/>
        <end position="166"/>
    </location>
</feature>
<feature type="helix" evidence="15">
    <location>
        <begin position="171"/>
        <end position="178"/>
    </location>
</feature>
<feature type="helix" evidence="15">
    <location>
        <begin position="180"/>
        <end position="188"/>
    </location>
</feature>
<feature type="helix" evidence="15">
    <location>
        <begin position="191"/>
        <end position="198"/>
    </location>
</feature>
<feature type="helix" evidence="15">
    <location>
        <begin position="203"/>
        <end position="209"/>
    </location>
</feature>
<feature type="helix" evidence="15">
    <location>
        <begin position="215"/>
        <end position="224"/>
    </location>
</feature>
<feature type="helix" evidence="15">
    <location>
        <begin position="228"/>
        <end position="230"/>
    </location>
</feature>
<feature type="helix" evidence="15">
    <location>
        <begin position="235"/>
        <end position="245"/>
    </location>
</feature>
<feature type="strand" evidence="15">
    <location>
        <begin position="251"/>
        <end position="254"/>
    </location>
</feature>
<feature type="helix" evidence="15">
    <location>
        <begin position="260"/>
        <end position="268"/>
    </location>
</feature>
<feature type="helix" evidence="15">
    <location>
        <begin position="269"/>
        <end position="272"/>
    </location>
</feature>
<feature type="strand" evidence="15">
    <location>
        <begin position="273"/>
        <end position="284"/>
    </location>
</feature>
<feature type="strand" evidence="15">
    <location>
        <begin position="289"/>
        <end position="295"/>
    </location>
</feature>
<feature type="strand" evidence="15">
    <location>
        <begin position="300"/>
        <end position="310"/>
    </location>
</feature>
<feature type="helix" evidence="15">
    <location>
        <begin position="314"/>
        <end position="319"/>
    </location>
</feature>
<feature type="strand" evidence="15">
    <location>
        <begin position="320"/>
        <end position="324"/>
    </location>
</feature>
<feature type="helix" evidence="15">
    <location>
        <begin position="328"/>
        <end position="336"/>
    </location>
</feature>
<feature type="strand" evidence="15">
    <location>
        <begin position="342"/>
        <end position="351"/>
    </location>
</feature>
<feature type="helix" evidence="15">
    <location>
        <begin position="353"/>
        <end position="357"/>
    </location>
</feature>
<feature type="strand" evidence="15">
    <location>
        <begin position="363"/>
        <end position="368"/>
    </location>
</feature>
<feature type="strand" evidence="15">
    <location>
        <begin position="372"/>
        <end position="374"/>
    </location>
</feature>
<feature type="strand" evidence="15">
    <location>
        <begin position="385"/>
        <end position="392"/>
    </location>
</feature>
<feature type="helix" evidence="15">
    <location>
        <begin position="394"/>
        <end position="397"/>
    </location>
</feature>
<feature type="turn" evidence="15">
    <location>
        <begin position="398"/>
        <end position="401"/>
    </location>
</feature>
<feature type="helix" evidence="15">
    <location>
        <begin position="404"/>
        <end position="419"/>
    </location>
</feature>
<feature type="helix" evidence="15">
    <location>
        <begin position="423"/>
        <end position="429"/>
    </location>
</feature>
<feature type="strand" evidence="15">
    <location>
        <begin position="430"/>
        <end position="437"/>
    </location>
</feature>
<feature type="helix" evidence="15">
    <location>
        <begin position="438"/>
        <end position="440"/>
    </location>
</feature>
<feature type="turn" evidence="15">
    <location>
        <begin position="442"/>
        <end position="444"/>
    </location>
</feature>
<feature type="strand" evidence="15">
    <location>
        <begin position="446"/>
        <end position="449"/>
    </location>
</feature>
<feature type="helix" evidence="15">
    <location>
        <begin position="455"/>
        <end position="464"/>
    </location>
</feature>
<feature type="strand" evidence="15">
    <location>
        <begin position="470"/>
        <end position="472"/>
    </location>
</feature>
<feature type="helix" evidence="15">
    <location>
        <begin position="475"/>
        <end position="477"/>
    </location>
</feature>
<feature type="strand" evidence="15">
    <location>
        <begin position="478"/>
        <end position="482"/>
    </location>
</feature>
<feature type="helix" evidence="15">
    <location>
        <begin position="484"/>
        <end position="501"/>
    </location>
</feature>
<comment type="function">
    <text evidence="2 3">Catalyzes an oxidative deamination of predominantly hydrophobic and aromatic L-amino acids, thus producing hydrogen peroxide that may contribute to the diverse toxic effects of this enzyme (PubMed:18804547). Shows high catalytic activity against L-Met, L-Leu, L-Phe, L-Trp, L-Tyr, L-Ile (PubMed:18804547). Shows no or weak activity on L-Cys, L-Val, L-Gln, L-Thr, L-Ser, L-Lys, L-Arg, L-Asn, L-Glu, L-Gly, L-Pro, L-Asp and L-His (PubMed:18804547). Induces platelet aggregation in platelet-rich plasma, probably due to hydrogen peroxide production, since catalase inhibits aggregation effect (PubMed:18804547). Induces moderate mouse paw edema (PubMed:18804547). Induces apoptosis and shows cytotoxicity against several cancer cell lines, which is inhibited by catalase (PubMed:18804547, PubMed:21300133). Shows hemolytic activity and antibacterial activities against both Gram-positive and Gram-negative bacteria (PubMed:21300133). Has parasiticidal activities against both trypanosomes and leishmania, as a result of enzyme-catalyzed hydrogen peroxide production (PubMed:21300133). Unlike other snake venom L-amino acid oxidases, does not induce hemorrhage (with 50 ug of enzyme) (PubMed:18804547).</text>
</comment>
<comment type="catalytic activity">
    <reaction evidence="2">
        <text>an L-alpha-amino acid + O2 + H2O = a 2-oxocarboxylate + H2O2 + NH4(+)</text>
        <dbReference type="Rhea" id="RHEA:13781"/>
        <dbReference type="ChEBI" id="CHEBI:15377"/>
        <dbReference type="ChEBI" id="CHEBI:15379"/>
        <dbReference type="ChEBI" id="CHEBI:16240"/>
        <dbReference type="ChEBI" id="CHEBI:28938"/>
        <dbReference type="ChEBI" id="CHEBI:35179"/>
        <dbReference type="ChEBI" id="CHEBI:59869"/>
        <dbReference type="EC" id="1.4.3.2"/>
    </reaction>
</comment>
<comment type="catalytic activity">
    <reaction evidence="2">
        <text>L-leucine + O2 + H2O = 4-methyl-2-oxopentanoate + H2O2 + NH4(+)</text>
        <dbReference type="Rhea" id="RHEA:60996"/>
        <dbReference type="ChEBI" id="CHEBI:15377"/>
        <dbReference type="ChEBI" id="CHEBI:15379"/>
        <dbReference type="ChEBI" id="CHEBI:16240"/>
        <dbReference type="ChEBI" id="CHEBI:17865"/>
        <dbReference type="ChEBI" id="CHEBI:28938"/>
        <dbReference type="ChEBI" id="CHEBI:57427"/>
    </reaction>
</comment>
<comment type="catalytic activity">
    <reaction evidence="2">
        <text>L-phenylalanine + O2 + H2O = 3-phenylpyruvate + H2O2 + NH4(+)</text>
        <dbReference type="Rhea" id="RHEA:61240"/>
        <dbReference type="ChEBI" id="CHEBI:15377"/>
        <dbReference type="ChEBI" id="CHEBI:15379"/>
        <dbReference type="ChEBI" id="CHEBI:16240"/>
        <dbReference type="ChEBI" id="CHEBI:18005"/>
        <dbReference type="ChEBI" id="CHEBI:28938"/>
        <dbReference type="ChEBI" id="CHEBI:58095"/>
    </reaction>
</comment>
<comment type="catalytic activity">
    <reaction evidence="2">
        <text>L-tryptophan + O2 + H2O = indole-3-pyruvate + H2O2 + NH4(+)</text>
        <dbReference type="Rhea" id="RHEA:61244"/>
        <dbReference type="ChEBI" id="CHEBI:15377"/>
        <dbReference type="ChEBI" id="CHEBI:15379"/>
        <dbReference type="ChEBI" id="CHEBI:16240"/>
        <dbReference type="ChEBI" id="CHEBI:17640"/>
        <dbReference type="ChEBI" id="CHEBI:28938"/>
        <dbReference type="ChEBI" id="CHEBI:57912"/>
    </reaction>
</comment>
<comment type="catalytic activity">
    <reaction evidence="2">
        <text>L-methionine + O2 + H2O = 4-methylsulfanyl-2-oxobutanoate + H2O2 + NH4(+)</text>
        <dbReference type="Rhea" id="RHEA:61236"/>
        <dbReference type="ChEBI" id="CHEBI:15377"/>
        <dbReference type="ChEBI" id="CHEBI:15379"/>
        <dbReference type="ChEBI" id="CHEBI:16240"/>
        <dbReference type="ChEBI" id="CHEBI:16723"/>
        <dbReference type="ChEBI" id="CHEBI:28938"/>
        <dbReference type="ChEBI" id="CHEBI:57844"/>
    </reaction>
</comment>
<comment type="catalytic activity">
    <reaction evidence="2">
        <text>L-isoleucine + O2 + H2O = (S)-3-methyl-2-oxopentanoate + H2O2 + NH4(+)</text>
        <dbReference type="Rhea" id="RHEA:61232"/>
        <dbReference type="ChEBI" id="CHEBI:15377"/>
        <dbReference type="ChEBI" id="CHEBI:15379"/>
        <dbReference type="ChEBI" id="CHEBI:16240"/>
        <dbReference type="ChEBI" id="CHEBI:28938"/>
        <dbReference type="ChEBI" id="CHEBI:35146"/>
        <dbReference type="ChEBI" id="CHEBI:58045"/>
    </reaction>
</comment>
<comment type="catalytic activity">
    <reaction evidence="2">
        <text>L-tyrosine + O2 + H2O = 3-(4-hydroxyphenyl)pyruvate + H2O2 + NH4(+)</text>
        <dbReference type="Rhea" id="RHEA:61248"/>
        <dbReference type="ChEBI" id="CHEBI:15377"/>
        <dbReference type="ChEBI" id="CHEBI:15379"/>
        <dbReference type="ChEBI" id="CHEBI:16240"/>
        <dbReference type="ChEBI" id="CHEBI:28938"/>
        <dbReference type="ChEBI" id="CHEBI:36242"/>
        <dbReference type="ChEBI" id="CHEBI:58315"/>
    </reaction>
</comment>
<comment type="cofactor">
    <cofactor evidence="4">
        <name>FAD</name>
        <dbReference type="ChEBI" id="CHEBI:57692"/>
    </cofactor>
</comment>
<comment type="subunit">
    <text evidence="10">Homodimer; non-covalently linked. Stabilized by a single zinc-binding site located at the dimer interface (Asp-219, His-332 and His-458). Other zinc-bind sites can be understood as transient and non-specific, and appear due to the high concentration of zinc ions used in the crystallization experiments.</text>
</comment>
<comment type="subcellular location">
    <subcellularLocation>
        <location evidence="2">Secreted</location>
    </subcellularLocation>
</comment>
<comment type="tissue specificity">
    <text evidence="9">Expressed by the venom gland.</text>
</comment>
<comment type="similarity">
    <text evidence="8">Belongs to the flavin monoamine oxidase family. FIG1 subfamily.</text>
</comment>
<proteinExistence type="evidence at protein level"/>
<evidence type="ECO:0000250" key="1">
    <source>
        <dbReference type="UniProtKB" id="P81382"/>
    </source>
</evidence>
<evidence type="ECO:0000269" key="2">
    <source>
    </source>
</evidence>
<evidence type="ECO:0000269" key="3">
    <source>
    </source>
</evidence>
<evidence type="ECO:0000269" key="4">
    <source>
    </source>
</evidence>
<evidence type="ECO:0000303" key="5">
    <source>
    </source>
</evidence>
<evidence type="ECO:0000303" key="6">
    <source>
    </source>
</evidence>
<evidence type="ECO:0000303" key="7">
    <source>
    </source>
</evidence>
<evidence type="ECO:0000305" key="8"/>
<evidence type="ECO:0000305" key="9">
    <source>
    </source>
</evidence>
<evidence type="ECO:0000305" key="10">
    <source>
    </source>
</evidence>
<evidence type="ECO:0000305" key="11">
    <source ref="1"/>
</evidence>
<evidence type="ECO:0000312" key="12">
    <source>
        <dbReference type="EMBL" id="ALL27300.1"/>
    </source>
</evidence>
<evidence type="ECO:0000312" key="13">
    <source>
        <dbReference type="EMBL" id="JAV01887.1"/>
    </source>
</evidence>
<evidence type="ECO:0007744" key="14">
    <source>
        <dbReference type="PDB" id="5TS5"/>
    </source>
</evidence>
<evidence type="ECO:0007829" key="15">
    <source>
        <dbReference type="PDB" id="5TS5"/>
    </source>
</evidence>
<name>OXLA_BOTAT</name>
<reference evidence="13" key="1">
    <citation type="submission" date="2015-11" db="EMBL/GenBank/DDBJ databases">
        <title>Transcriptomic analysis of venom glands from five Bothrops atrox snakes.</title>
        <authorList>
            <person name="Amazonas D.R."/>
            <person name="Nishiyama M.Y. Jr."/>
            <person name="Gibbs H.L."/>
            <person name="Rokyta D.R."/>
            <person name="Junqueira-de-Azevedo I.L."/>
            <person name="Moura-da-Silva A.M."/>
        </authorList>
    </citation>
    <scope>NUCLEOTIDE SEQUENCE [MRNA]</scope>
    <source>
        <tissue>Venom gland</tissue>
    </source>
</reference>
<reference evidence="12" key="2">
    <citation type="submission" date="2015-06" db="EMBL/GenBank/DDBJ databases">
        <title>Molecular and biological study of the L-amino acid oxidase from the Peruvian Bothrops atrox venom.</title>
        <authorList>
            <person name="Vivas D.E."/>
            <person name="Lazo F.E."/>
            <person name="Sandoval G.A."/>
            <person name="Rodriguez E.F."/>
            <person name="Yarleque A."/>
            <person name="Sanchez E.F."/>
        </authorList>
    </citation>
    <scope>NUCLEOTIDE SEQUENCE [MRNA] OF 8-506</scope>
</reference>
<reference key="3">
    <citation type="journal article" date="2008" name="Comp. Biochem. Physiol.">
        <title>Evidence of caspase-mediated apoptosis induced by l-amino acid oxidase isolated from Bothrops atrox snake venom.</title>
        <authorList>
            <person name="Alves R.M."/>
            <person name="Antonucci G.A."/>
            <person name="Paiva H.H."/>
            <person name="Cintra A.C."/>
            <person name="Franco J.J."/>
            <person name="Mendonca-Franqueiro E.P."/>
            <person name="Dorta D.J."/>
            <person name="Giglio J.R."/>
            <person name="Rosa J.C."/>
            <person name="Fuly A.L."/>
            <person name="Dias-Baruffi M."/>
            <person name="Soares A.M."/>
            <person name="Sampaio S.V."/>
        </authorList>
    </citation>
    <scope>PROTEIN SEQUENCE OF 19-27; 121-143; 147-182; 241-249; 320-329; 352-363 AND 470-489</scope>
    <scope>FUNCTION</scope>
    <scope>SUBCELLULAR LOCATION</scope>
    <scope>GLYCOSYLATION</scope>
    <scope>CATALYTIC ACTIVITY</scope>
    <scope>SUBSTRATE SPECIFICITY</scope>
    <source>
        <tissue>Venom</tissue>
    </source>
</reference>
<reference key="4">
    <citation type="journal article" date="2011" name="Biochimie">
        <title>Cell cycle arrest evidence, parasiticidal and bactericidal properties induced by L-amino acid oxidase from Bothrops atrox snake venom.</title>
        <authorList>
            <person name="de Melo Alves Paiva R."/>
            <person name="de Freitas Figueiredo R."/>
            <person name="Antonucci G.A."/>
            <person name="Paiva H.H."/>
            <person name="de Lourdes Pires Bianchi M."/>
            <person name="Rodrigues K.C."/>
            <person name="Lucarini R."/>
            <person name="Caetano R.C."/>
            <person name="Linhari Rodrigues Pietro R.C."/>
            <person name="Gomes Martins C.H."/>
            <person name="de Albuquerque S."/>
            <person name="Sampaio S.V."/>
        </authorList>
    </citation>
    <scope>FUNCTION</scope>
    <source>
        <tissue>Venom</tissue>
    </source>
</reference>
<reference key="5">
    <citation type="journal article" date="2011" name="Acta Crystallogr. F">
        <title>A rational protocol for the successful crystallization of L-amino-acid oxidase from Bothrops atrox.</title>
        <authorList>
            <person name="Alves R.M."/>
            <person name="Feliciano P.R."/>
            <person name="Sampaio S.V."/>
            <person name="Nonato M.C."/>
        </authorList>
    </citation>
    <scope>CRYSTALLIZATION</scope>
    <source>
        <tissue>Venom</tissue>
    </source>
</reference>
<reference evidence="14" key="6">
    <citation type="journal article" date="2017" name="Toxicon">
        <title>Crystal structure and molecular dynamics studies of L-amino acid oxidase from Bothrops atrox.</title>
        <authorList>
            <person name="Feliciano P.R."/>
            <person name="Rustiguel J.K."/>
            <person name="Soares R.O."/>
            <person name="Sampaio S.V."/>
            <person name="Cristina Nonato M."/>
        </authorList>
    </citation>
    <scope>X-RAY CRYSTALLOGRAPHY (2.30 ANGSTROMS) OF 12-495 IN COMPLEX WITH FAD AND ZINC IONS</scope>
    <scope>GLYCOSYLATION AT ASN-190</scope>
    <scope>DISULFIDE BONDS</scope>
    <scope>COFACTOR</scope>
</reference>